<gene>
    <name type="ordered locus">PM0415</name>
</gene>
<proteinExistence type="inferred from homology"/>
<comment type="subcellular location">
    <subcellularLocation>
        <location evidence="2">Membrane</location>
        <topology evidence="2">Single-pass membrane protein</topology>
    </subcellularLocation>
</comment>
<accession>Q9CNL3</accession>
<sequence length="81" mass="9432">MRYNSFLSVLALFNVLLWFTFILAISMTFSAINLLMSKKFTMKNVQPTRLDWFFVLLPYVIGLFFAIFDSATIGQVFFWGA</sequence>
<evidence type="ECO:0000255" key="1"/>
<evidence type="ECO:0000305" key="2"/>
<reference key="1">
    <citation type="journal article" date="2001" name="Proc. Natl. Acad. Sci. U.S.A.">
        <title>Complete genomic sequence of Pasteurella multocida Pm70.</title>
        <authorList>
            <person name="May B.J."/>
            <person name="Zhang Q."/>
            <person name="Li L.L."/>
            <person name="Paustian M.L."/>
            <person name="Whittam T.S."/>
            <person name="Kapur V."/>
        </authorList>
    </citation>
    <scope>NUCLEOTIDE SEQUENCE [LARGE SCALE GENOMIC DNA]</scope>
    <source>
        <strain>Pm70</strain>
    </source>
</reference>
<protein>
    <recommendedName>
        <fullName>Uncharacterized protein PM0415</fullName>
    </recommendedName>
</protein>
<dbReference type="EMBL" id="AE004439">
    <property type="protein sequence ID" value="AAK02499.1"/>
    <property type="molecule type" value="Genomic_DNA"/>
</dbReference>
<dbReference type="EnsemblBacteria" id="AAK02499">
    <property type="protein sequence ID" value="AAK02499"/>
    <property type="gene ID" value="PM0415"/>
</dbReference>
<dbReference type="KEGG" id="pmu:PM0415"/>
<dbReference type="HOGENOM" id="CLU_173276_0_0_6"/>
<dbReference type="Proteomes" id="UP000000809">
    <property type="component" value="Chromosome"/>
</dbReference>
<dbReference type="GO" id="GO:0016020">
    <property type="term" value="C:membrane"/>
    <property type="evidence" value="ECO:0007669"/>
    <property type="project" value="UniProtKB-SubCell"/>
</dbReference>
<name>Y415_PASMU</name>
<keyword id="KW-0472">Membrane</keyword>
<keyword id="KW-1185">Reference proteome</keyword>
<keyword id="KW-0732">Signal</keyword>
<keyword id="KW-0812">Transmembrane</keyword>
<keyword id="KW-1133">Transmembrane helix</keyword>
<organism>
    <name type="scientific">Pasteurella multocida (strain Pm70)</name>
    <dbReference type="NCBI Taxonomy" id="272843"/>
    <lineage>
        <taxon>Bacteria</taxon>
        <taxon>Pseudomonadati</taxon>
        <taxon>Pseudomonadota</taxon>
        <taxon>Gammaproteobacteria</taxon>
        <taxon>Pasteurellales</taxon>
        <taxon>Pasteurellaceae</taxon>
        <taxon>Pasteurella</taxon>
    </lineage>
</organism>
<feature type="signal peptide" evidence="1">
    <location>
        <begin position="1"/>
        <end position="31"/>
    </location>
</feature>
<feature type="chain" id="PRO_0000014175" description="Uncharacterized protein PM0415">
    <location>
        <begin position="32"/>
        <end position="81"/>
    </location>
</feature>
<feature type="transmembrane region" description="Helical" evidence="1">
    <location>
        <begin position="52"/>
        <end position="74"/>
    </location>
</feature>